<organism>
    <name type="scientific">Pyrococcus abyssi (strain GE5 / Orsay)</name>
    <dbReference type="NCBI Taxonomy" id="272844"/>
    <lineage>
        <taxon>Archaea</taxon>
        <taxon>Methanobacteriati</taxon>
        <taxon>Methanobacteriota</taxon>
        <taxon>Thermococci</taxon>
        <taxon>Thermococcales</taxon>
        <taxon>Thermococcaceae</taxon>
        <taxon>Pyrococcus</taxon>
    </lineage>
</organism>
<protein>
    <recommendedName>
        <fullName evidence="3">GPN-loop GTPase PAB0955</fullName>
        <ecNumber evidence="2">3.6.5.-</ecNumber>
    </recommendedName>
</protein>
<dbReference type="EC" id="3.6.5.-" evidence="2"/>
<dbReference type="EMBL" id="AJ248287">
    <property type="protein sequence ID" value="CAB50343.1"/>
    <property type="status" value="ALT_INIT"/>
    <property type="molecule type" value="Genomic_DNA"/>
</dbReference>
<dbReference type="EMBL" id="HE613800">
    <property type="protein sequence ID" value="CCE70884.1"/>
    <property type="molecule type" value="Genomic_DNA"/>
</dbReference>
<dbReference type="PIR" id="B75056">
    <property type="entry name" value="B75056"/>
</dbReference>
<dbReference type="RefSeq" id="WP_048147021.1">
    <property type="nucleotide sequence ID" value="NC_000868.1"/>
</dbReference>
<dbReference type="PDB" id="1YR6">
    <property type="method" value="X-ray"/>
    <property type="resolution" value="2.15 A"/>
    <property type="chains" value="A=1-248"/>
</dbReference>
<dbReference type="PDB" id="1YR7">
    <property type="method" value="X-ray"/>
    <property type="resolution" value="2.08 A"/>
    <property type="chains" value="A=1-248"/>
</dbReference>
<dbReference type="PDB" id="1YR8">
    <property type="method" value="X-ray"/>
    <property type="resolution" value="2.40 A"/>
    <property type="chains" value="A=1-248"/>
</dbReference>
<dbReference type="PDB" id="1YR9">
    <property type="method" value="X-ray"/>
    <property type="resolution" value="2.80 A"/>
    <property type="chains" value="A=1-248"/>
</dbReference>
<dbReference type="PDB" id="1YRA">
    <property type="method" value="X-ray"/>
    <property type="resolution" value="2.30 A"/>
    <property type="chains" value="A/B=1-248"/>
</dbReference>
<dbReference type="PDB" id="1YRB">
    <property type="method" value="X-ray"/>
    <property type="resolution" value="1.75 A"/>
    <property type="chains" value="A/B=1-248"/>
</dbReference>
<dbReference type="PDB" id="2OXR">
    <property type="method" value="X-ray"/>
    <property type="resolution" value="2.40 A"/>
    <property type="chains" value="A=1-248"/>
</dbReference>
<dbReference type="PDBsum" id="1YR6"/>
<dbReference type="PDBsum" id="1YR7"/>
<dbReference type="PDBsum" id="1YR8"/>
<dbReference type="PDBsum" id="1YR9"/>
<dbReference type="PDBsum" id="1YRA"/>
<dbReference type="PDBsum" id="1YRB"/>
<dbReference type="PDBsum" id="2OXR"/>
<dbReference type="SMR" id="Q9UYR9"/>
<dbReference type="MINT" id="Q9UYR9"/>
<dbReference type="STRING" id="272844.PAB0955"/>
<dbReference type="KEGG" id="pab:PAB0955"/>
<dbReference type="PATRIC" id="fig|272844.11.peg.1529"/>
<dbReference type="eggNOG" id="arCOG01225">
    <property type="taxonomic scope" value="Archaea"/>
</dbReference>
<dbReference type="HOGENOM" id="CLU_037460_3_0_2"/>
<dbReference type="OrthoDB" id="31092at2157"/>
<dbReference type="EvolutionaryTrace" id="Q9UYR9"/>
<dbReference type="Proteomes" id="UP000000810">
    <property type="component" value="Chromosome"/>
</dbReference>
<dbReference type="Proteomes" id="UP000009139">
    <property type="component" value="Chromosome"/>
</dbReference>
<dbReference type="GO" id="GO:0005525">
    <property type="term" value="F:GTP binding"/>
    <property type="evidence" value="ECO:0007669"/>
    <property type="project" value="UniProtKB-KW"/>
</dbReference>
<dbReference type="GO" id="GO:0003924">
    <property type="term" value="F:GTPase activity"/>
    <property type="evidence" value="ECO:0007669"/>
    <property type="project" value="InterPro"/>
</dbReference>
<dbReference type="CDD" id="cd17870">
    <property type="entry name" value="GPN1"/>
    <property type="match status" value="1"/>
</dbReference>
<dbReference type="Gene3D" id="3.40.50.300">
    <property type="entry name" value="P-loop containing nucleotide triphosphate hydrolases"/>
    <property type="match status" value="1"/>
</dbReference>
<dbReference type="InterPro" id="IPR004130">
    <property type="entry name" value="Gpn"/>
</dbReference>
<dbReference type="InterPro" id="IPR030230">
    <property type="entry name" value="Gpn1/Npa3/XAB1"/>
</dbReference>
<dbReference type="InterPro" id="IPR027417">
    <property type="entry name" value="P-loop_NTPase"/>
</dbReference>
<dbReference type="NCBIfam" id="NF010339">
    <property type="entry name" value="PRK13768.1-1"/>
    <property type="match status" value="1"/>
</dbReference>
<dbReference type="PANTHER" id="PTHR21231:SF8">
    <property type="entry name" value="GPN-LOOP GTPASE 1"/>
    <property type="match status" value="1"/>
</dbReference>
<dbReference type="PANTHER" id="PTHR21231">
    <property type="entry name" value="XPA-BINDING PROTEIN 1-RELATED"/>
    <property type="match status" value="1"/>
</dbReference>
<dbReference type="Pfam" id="PF03029">
    <property type="entry name" value="ATP_bind_1"/>
    <property type="match status" value="1"/>
</dbReference>
<dbReference type="SUPFAM" id="SSF52540">
    <property type="entry name" value="P-loop containing nucleoside triphosphate hydrolases"/>
    <property type="match status" value="1"/>
</dbReference>
<name>GPN_PYRAB</name>
<evidence type="ECO:0000269" key="1">
    <source>
    </source>
</evidence>
<evidence type="ECO:0000269" key="2">
    <source>
    </source>
</evidence>
<evidence type="ECO:0000303" key="3">
    <source>
    </source>
</evidence>
<evidence type="ECO:0000305" key="4"/>
<evidence type="ECO:0000305" key="5">
    <source>
    </source>
</evidence>
<evidence type="ECO:0000312" key="6">
    <source>
        <dbReference type="EMBL" id="CAB50343.1"/>
    </source>
</evidence>
<evidence type="ECO:0000312" key="7">
    <source>
        <dbReference type="EMBL" id="CCE70884.1"/>
    </source>
</evidence>
<evidence type="ECO:0007829" key="8">
    <source>
        <dbReference type="PDB" id="1YRB"/>
    </source>
</evidence>
<proteinExistence type="evidence at protein level"/>
<keyword id="KW-0002">3D-structure</keyword>
<keyword id="KW-0342">GTP-binding</keyword>
<keyword id="KW-0378">Hydrolase</keyword>
<keyword id="KW-0547">Nucleotide-binding</keyword>
<comment type="function">
    <text evidence="2">Small GTPase that may be involved in genome maintenance. Has weak intrinsic GTPase activity but displays no ATPase activity.</text>
</comment>
<comment type="subunit">
    <text evidence="1 2">Homodimer (PubMed:16510996). Interacts with DNA topoisomerase VI subunit B (top6B), DNA primase DnaG and RF-C (PubMed:17468740).</text>
</comment>
<comment type="similarity">
    <text evidence="4">Belongs to the GPN-loop GTPase family.</text>
</comment>
<comment type="sequence caution" evidence="4">
    <conflict type="erroneous initiation">
        <sequence resource="EMBL-CDS" id="CAB50343"/>
    </conflict>
    <text>Extended N-terminus.</text>
</comment>
<feature type="chain" id="PRO_0000431297" description="GPN-loop GTPase PAB0955">
    <location>
        <begin position="1"/>
        <end position="248"/>
    </location>
</feature>
<feature type="short sequence motif" description="Gly-Pro-Asn (GPN)-loop; involved in dimer interface" evidence="2">
    <location>
        <begin position="65"/>
        <end position="67"/>
    </location>
</feature>
<feature type="binding site" evidence="2">
    <location>
        <begin position="10"/>
        <end position="15"/>
    </location>
    <ligand>
        <name>GTP</name>
        <dbReference type="ChEBI" id="CHEBI:37565"/>
    </ligand>
</feature>
<feature type="binding site" evidence="2">
    <location>
        <begin position="165"/>
        <end position="168"/>
    </location>
    <ligand>
        <name>GTP</name>
        <dbReference type="ChEBI" id="CHEBI:37565"/>
    </ligand>
</feature>
<feature type="binding site" evidence="2">
    <location>
        <position position="224"/>
    </location>
    <ligand>
        <name>GTP</name>
        <dbReference type="ChEBI" id="CHEBI:37565"/>
    </ligand>
</feature>
<feature type="site" description="Stabilizes the phosphate intermediate; shared with dimeric partner" evidence="5">
    <location>
        <position position="67"/>
    </location>
</feature>
<feature type="strand" evidence="8">
    <location>
        <begin position="1"/>
        <end position="6"/>
    </location>
</feature>
<feature type="helix" evidence="8">
    <location>
        <begin position="13"/>
        <end position="24"/>
    </location>
</feature>
<feature type="turn" evidence="8">
    <location>
        <begin position="25"/>
        <end position="27"/>
    </location>
</feature>
<feature type="strand" evidence="8">
    <location>
        <begin position="30"/>
        <end position="34"/>
    </location>
</feature>
<feature type="strand" evidence="8">
    <location>
        <begin position="47"/>
        <end position="49"/>
    </location>
</feature>
<feature type="helix" evidence="8">
    <location>
        <begin position="50"/>
        <end position="52"/>
    </location>
</feature>
<feature type="helix" evidence="8">
    <location>
        <begin position="56"/>
        <end position="60"/>
    </location>
</feature>
<feature type="turn" evidence="8">
    <location>
        <begin position="61"/>
        <end position="63"/>
    </location>
</feature>
<feature type="helix" evidence="8">
    <location>
        <begin position="66"/>
        <end position="78"/>
    </location>
</feature>
<feature type="helix" evidence="8">
    <location>
        <begin position="81"/>
        <end position="94"/>
    </location>
</feature>
<feature type="strand" evidence="8">
    <location>
        <begin position="96"/>
        <end position="101"/>
    </location>
</feature>
<feature type="helix" evidence="8">
    <location>
        <begin position="106"/>
        <end position="111"/>
    </location>
</feature>
<feature type="helix" evidence="8">
    <location>
        <begin position="113"/>
        <end position="120"/>
    </location>
</feature>
<feature type="strand" evidence="8">
    <location>
        <begin position="122"/>
        <end position="124"/>
    </location>
</feature>
<feature type="strand" evidence="8">
    <location>
        <begin position="126"/>
        <end position="131"/>
    </location>
</feature>
<feature type="helix" evidence="8">
    <location>
        <begin position="133"/>
        <end position="135"/>
    </location>
</feature>
<feature type="helix" evidence="8">
    <location>
        <begin position="139"/>
        <end position="156"/>
    </location>
</feature>
<feature type="strand" evidence="8">
    <location>
        <begin position="160"/>
        <end position="164"/>
    </location>
</feature>
<feature type="helix" evidence="8">
    <location>
        <begin position="167"/>
        <end position="169"/>
    </location>
</feature>
<feature type="helix" evidence="8">
    <location>
        <begin position="172"/>
        <end position="183"/>
    </location>
</feature>
<feature type="helix" evidence="8">
    <location>
        <begin position="185"/>
        <end position="194"/>
    </location>
</feature>
<feature type="helix" evidence="8">
    <location>
        <begin position="198"/>
        <end position="213"/>
    </location>
</feature>
<feature type="turn" evidence="8">
    <location>
        <begin position="224"/>
        <end position="226"/>
    </location>
</feature>
<feature type="helix" evidence="8">
    <location>
        <begin position="230"/>
        <end position="244"/>
    </location>
</feature>
<reference key="1">
    <citation type="journal article" date="2003" name="Mol. Microbiol.">
        <title>An integrated analysis of the genome of the hyperthermophilic archaeon Pyrococcus abyssi.</title>
        <authorList>
            <person name="Cohen G.N."/>
            <person name="Barbe V."/>
            <person name="Flament D."/>
            <person name="Galperin M."/>
            <person name="Heilig R."/>
            <person name="Lecompte O."/>
            <person name="Poch O."/>
            <person name="Prieur D."/>
            <person name="Querellou J."/>
            <person name="Ripp R."/>
            <person name="Thierry J.-C."/>
            <person name="Van der Oost J."/>
            <person name="Weissenbach J."/>
            <person name="Zivanovic Y."/>
            <person name="Forterre P."/>
        </authorList>
    </citation>
    <scope>NUCLEOTIDE SEQUENCE [LARGE SCALE GENOMIC DNA]</scope>
    <source>
        <strain>GE5 / Orsay</strain>
    </source>
</reference>
<reference key="2">
    <citation type="journal article" date="2012" name="Curr. Microbiol.">
        <title>Re-annotation of two hyperthermophilic archaea Pyrococcus abyssi GE5 and Pyrococcus furiosus DSM 3638.</title>
        <authorList>
            <person name="Gao J."/>
            <person name="Wang J."/>
        </authorList>
    </citation>
    <scope>GENOME REANNOTATION</scope>
    <source>
        <strain>GE5 / Orsay</strain>
    </source>
</reference>
<reference key="3">
    <citation type="journal article" date="2005" name="Acta Crystallogr. F">
        <title>Expression, purification, crystallization and preliminary crystallographic analysis of the PAB0955 gene product.</title>
        <authorList>
            <person name="Gras S."/>
            <person name="Fernandez B."/>
            <person name="Chaumont V."/>
            <person name="Carpentier P."/>
            <person name="Armengaud J."/>
            <person name="Housset D."/>
        </authorList>
    </citation>
    <scope>SUBUNIT</scope>
</reference>
<reference key="4">
    <citation type="journal article" date="2007" name="EMBO Rep.">
        <title>Structural insights into a new homodimeric self-activated GTPase family.</title>
        <authorList>
            <person name="Gras S."/>
            <person name="Chaumont V."/>
            <person name="Fernandez B."/>
            <person name="Carpentier P."/>
            <person name="Charrier-Savournin F."/>
            <person name="Schmitt S."/>
            <person name="Pineau C."/>
            <person name="Flament D."/>
            <person name="Hecker A."/>
            <person name="Forterre P."/>
            <person name="Armengaud J."/>
            <person name="Housset D."/>
        </authorList>
    </citation>
    <scope>X-RAY CRYSTALLOGRAPHY (1.75 ANGSTROMS) OF 1-248 IN COMPLEX WITH GTP</scope>
    <scope>CATALYTIC ACTIVITY</scope>
    <scope>INTERACTION WITH TOP6B; DNAG AND RF-C</scope>
</reference>
<gene>
    <name evidence="6" type="ordered locus">PYRAB14380</name>
    <name evidence="6 7" type="ORF">PAB0955</name>
</gene>
<accession>Q9UYR9</accession>
<accession>G8ZIK1</accession>
<sequence length="248" mass="28697">MIVVFVGTAGSGKTTLTGEFGRYLEDNYKVAYVNLDTGVKELPYEPSIDVREFVTVEEIMREGYGPNGAIVESYDRLMEKFNEYLNKILRLEKENDYVLIDTPGQMETFLFHEFGVRLMENLPYPLVVYISDPEILKKPNDYCFVRFFALLIDLRLGATTIPALNKVDLLSEEEKERHRKYFEDIDYLTARLKLDPSMQGLMAYKMCSMMTEVLPPVRVLYLSAKTREGFEDLETLAYEHYCTCGDLT</sequence>